<evidence type="ECO:0000250" key="1">
    <source>
        <dbReference type="UniProtKB" id="O15235"/>
    </source>
</evidence>
<evidence type="ECO:0000255" key="2"/>
<evidence type="ECO:0000256" key="3">
    <source>
        <dbReference type="SAM" id="MobiDB-lite"/>
    </source>
</evidence>
<evidence type="ECO:0000305" key="4"/>
<protein>
    <recommendedName>
        <fullName evidence="4">Small ribosomal subunit protein uS12m</fullName>
    </recommendedName>
    <alternativeName>
        <fullName>28S ribosomal protein S12, mitochondrial</fullName>
        <shortName>MRP-S12</shortName>
        <shortName>S12mt</shortName>
    </alternativeName>
    <alternativeName>
        <fullName>MT-RPS12</fullName>
    </alternativeName>
</protein>
<dbReference type="EMBL" id="CR858825">
    <property type="protein sequence ID" value="CAH91028.1"/>
    <property type="molecule type" value="mRNA"/>
</dbReference>
<dbReference type="RefSeq" id="NP_001125594.1">
    <property type="nucleotide sequence ID" value="NM_001132122.1"/>
</dbReference>
<dbReference type="SMR" id="Q5RB32"/>
<dbReference type="STRING" id="9601.ENSPPYP00000011140"/>
<dbReference type="GeneID" id="100172510"/>
<dbReference type="KEGG" id="pon:100172510"/>
<dbReference type="CTD" id="6183"/>
<dbReference type="eggNOG" id="KOG1750">
    <property type="taxonomic scope" value="Eukaryota"/>
</dbReference>
<dbReference type="InParanoid" id="Q5RB32"/>
<dbReference type="OrthoDB" id="361013at2759"/>
<dbReference type="Proteomes" id="UP000001595">
    <property type="component" value="Unplaced"/>
</dbReference>
<dbReference type="GO" id="GO:0005763">
    <property type="term" value="C:mitochondrial small ribosomal subunit"/>
    <property type="evidence" value="ECO:0000250"/>
    <property type="project" value="UniProtKB"/>
</dbReference>
<dbReference type="GO" id="GO:0003735">
    <property type="term" value="F:structural constituent of ribosome"/>
    <property type="evidence" value="ECO:0007669"/>
    <property type="project" value="InterPro"/>
</dbReference>
<dbReference type="GO" id="GO:0006412">
    <property type="term" value="P:translation"/>
    <property type="evidence" value="ECO:0007669"/>
    <property type="project" value="InterPro"/>
</dbReference>
<dbReference type="CDD" id="cd03368">
    <property type="entry name" value="Ribosomal_S12"/>
    <property type="match status" value="1"/>
</dbReference>
<dbReference type="FunFam" id="2.40.50.140:FF:000115">
    <property type="entry name" value="28S ribosomal protein S12, mitochondrial"/>
    <property type="match status" value="1"/>
</dbReference>
<dbReference type="Gene3D" id="2.40.50.140">
    <property type="entry name" value="Nucleic acid-binding proteins"/>
    <property type="match status" value="1"/>
</dbReference>
<dbReference type="InterPro" id="IPR012340">
    <property type="entry name" value="NA-bd_OB-fold"/>
</dbReference>
<dbReference type="InterPro" id="IPR006032">
    <property type="entry name" value="Ribosomal_uS12"/>
</dbReference>
<dbReference type="InterPro" id="IPR005679">
    <property type="entry name" value="Ribosomal_uS12_bac"/>
</dbReference>
<dbReference type="NCBIfam" id="TIGR00981">
    <property type="entry name" value="rpsL_bact"/>
    <property type="match status" value="1"/>
</dbReference>
<dbReference type="PANTHER" id="PTHR11652">
    <property type="entry name" value="30S RIBOSOMAL PROTEIN S12 FAMILY MEMBER"/>
    <property type="match status" value="1"/>
</dbReference>
<dbReference type="Pfam" id="PF00164">
    <property type="entry name" value="Ribosom_S12_S23"/>
    <property type="match status" value="1"/>
</dbReference>
<dbReference type="PRINTS" id="PR01034">
    <property type="entry name" value="RIBOSOMALS12"/>
</dbReference>
<dbReference type="SUPFAM" id="SSF50249">
    <property type="entry name" value="Nucleic acid-binding proteins"/>
    <property type="match status" value="1"/>
</dbReference>
<dbReference type="PROSITE" id="PS00055">
    <property type="entry name" value="RIBOSOMAL_S12"/>
    <property type="match status" value="1"/>
</dbReference>
<organism>
    <name type="scientific">Pongo abelii</name>
    <name type="common">Sumatran orangutan</name>
    <name type="synonym">Pongo pygmaeus abelii</name>
    <dbReference type="NCBI Taxonomy" id="9601"/>
    <lineage>
        <taxon>Eukaryota</taxon>
        <taxon>Metazoa</taxon>
        <taxon>Chordata</taxon>
        <taxon>Craniata</taxon>
        <taxon>Vertebrata</taxon>
        <taxon>Euteleostomi</taxon>
        <taxon>Mammalia</taxon>
        <taxon>Eutheria</taxon>
        <taxon>Euarchontoglires</taxon>
        <taxon>Primates</taxon>
        <taxon>Haplorrhini</taxon>
        <taxon>Catarrhini</taxon>
        <taxon>Hominidae</taxon>
        <taxon>Pongo</taxon>
    </lineage>
</organism>
<sequence length="139" mass="15177">MSWSGPLRGLNTSLTCGPALVPRLWATCSMATLNQMHRLGGPPKRPPQKLGPTEGRPQLKGVVLCTFTRKPKKPNSANRKCCRVRLSTGQEAVCFIPGEGHTLQEHQIVLVEGGRTQDLPGVKLTVVRGKYDCGHVQKK</sequence>
<comment type="subunit">
    <text evidence="1">Component of the mitochondrial ribosome small subunit (28S) which comprises a 12S rRNA and about 30 distinct proteins.</text>
</comment>
<comment type="subcellular location">
    <subcellularLocation>
        <location evidence="1">Mitochondrion</location>
    </subcellularLocation>
</comment>
<comment type="similarity">
    <text evidence="4">Belongs to the universal ribosomal protein uS12 family.</text>
</comment>
<gene>
    <name type="primary">MRPS12</name>
</gene>
<keyword id="KW-0496">Mitochondrion</keyword>
<keyword id="KW-1185">Reference proteome</keyword>
<keyword id="KW-0687">Ribonucleoprotein</keyword>
<keyword id="KW-0689">Ribosomal protein</keyword>
<keyword id="KW-0809">Transit peptide</keyword>
<accession>Q5RB32</accession>
<feature type="transit peptide" description="Mitochondrion" evidence="2">
    <location>
        <begin position="1"/>
        <end position="29"/>
    </location>
</feature>
<feature type="chain" id="PRO_0000030608" description="Small ribosomal subunit protein uS12m">
    <location>
        <begin position="30"/>
        <end position="139"/>
    </location>
</feature>
<feature type="region of interest" description="Disordered" evidence="3">
    <location>
        <begin position="36"/>
        <end position="56"/>
    </location>
</feature>
<name>RT12_PONAB</name>
<reference key="1">
    <citation type="submission" date="2004-11" db="EMBL/GenBank/DDBJ databases">
        <authorList>
            <consortium name="The German cDNA consortium"/>
        </authorList>
    </citation>
    <scope>NUCLEOTIDE SEQUENCE [LARGE SCALE MRNA]</scope>
    <source>
        <tissue>Liver</tissue>
    </source>
</reference>
<proteinExistence type="evidence at transcript level"/>